<gene>
    <name type="primary">OR5P3</name>
</gene>
<comment type="function">
    <text evidence="3">Odorant receptor (Potential). May be involved in taste perception.</text>
</comment>
<comment type="subcellular location">
    <subcellularLocation>
        <location>Cell membrane</location>
        <topology>Multi-pass membrane protein</topology>
    </subcellularLocation>
</comment>
<comment type="tissue specificity">
    <text>Expressed in the tongue.</text>
</comment>
<comment type="similarity">
    <text evidence="2">Belongs to the G-protein coupled receptor 1 family.</text>
</comment>
<comment type="sequence caution" evidence="3">
    <conflict type="erroneous initiation">
        <sequence resource="EMBL-CDS" id="BAC05990"/>
    </conflict>
</comment>
<comment type="online information" name="Human Olfactory Receptor Data Exploratorium (HORDE)">
    <link uri="http://genome.weizmann.ac.il/horde/card/index/symbol:OR5P3"/>
</comment>
<sequence length="311" mass="34296">MGTGNDTTVVEFTLLGLSEDTTVCAILFLVFLGIYVVTLMGNISIIVLIRRSHHLHTPMYIFLCHLAFVDIGYSSSVTPVMLMSFLRKETSLPVAGCVAQLCSVVTFGTAECFLLAAMAYDRYVAICSPLLYSTCMSPGVCIILVGMSYLGGCVNAWTFIGCLLRLSFCGPNKVNHFFCDYSPLLKLACSHDFTFEIIPAISSGSIIVATVCVIAISYIYILITILKMHSTKGRHKAFSTCTSHLTAVTLFYGTITFIYVMPKSSYSTDQNKVVSVFYTVVIPMLNPLIYSLRNKEIKGALKRELRIKIFS</sequence>
<feature type="chain" id="PRO_0000150611" description="Olfactory receptor 5P3">
    <location>
        <begin position="1"/>
        <end position="311"/>
    </location>
</feature>
<feature type="topological domain" description="Extracellular" evidence="1">
    <location>
        <begin position="1"/>
        <end position="25"/>
    </location>
</feature>
<feature type="transmembrane region" description="Helical; Name=1" evidence="1">
    <location>
        <begin position="26"/>
        <end position="46"/>
    </location>
</feature>
<feature type="topological domain" description="Cytoplasmic" evidence="1">
    <location>
        <begin position="47"/>
        <end position="54"/>
    </location>
</feature>
<feature type="transmembrane region" description="Helical; Name=2" evidence="1">
    <location>
        <begin position="55"/>
        <end position="75"/>
    </location>
</feature>
<feature type="topological domain" description="Extracellular" evidence="1">
    <location>
        <begin position="76"/>
        <end position="99"/>
    </location>
</feature>
<feature type="transmembrane region" description="Helical; Name=3" evidence="1">
    <location>
        <begin position="100"/>
        <end position="120"/>
    </location>
</feature>
<feature type="topological domain" description="Cytoplasmic" evidence="1">
    <location>
        <begin position="121"/>
        <end position="139"/>
    </location>
</feature>
<feature type="transmembrane region" description="Helical; Name=4" evidence="1">
    <location>
        <begin position="140"/>
        <end position="160"/>
    </location>
</feature>
<feature type="topological domain" description="Extracellular" evidence="1">
    <location>
        <begin position="161"/>
        <end position="196"/>
    </location>
</feature>
<feature type="transmembrane region" description="Helical; Name=5" evidence="1">
    <location>
        <begin position="197"/>
        <end position="217"/>
    </location>
</feature>
<feature type="topological domain" description="Cytoplasmic" evidence="1">
    <location>
        <begin position="218"/>
        <end position="237"/>
    </location>
</feature>
<feature type="transmembrane region" description="Helical; Name=6" evidence="1">
    <location>
        <begin position="238"/>
        <end position="258"/>
    </location>
</feature>
<feature type="topological domain" description="Extracellular" evidence="1">
    <location>
        <begin position="259"/>
        <end position="271"/>
    </location>
</feature>
<feature type="transmembrane region" description="Helical; Name=7" evidence="1">
    <location>
        <begin position="272"/>
        <end position="292"/>
    </location>
</feature>
<feature type="topological domain" description="Cytoplasmic" evidence="1">
    <location>
        <begin position="293"/>
        <end position="311"/>
    </location>
</feature>
<feature type="glycosylation site" description="N-linked (GlcNAc...) asparagine" evidence="1">
    <location>
        <position position="5"/>
    </location>
</feature>
<feature type="disulfide bond" evidence="2">
    <location>
        <begin position="97"/>
        <end position="189"/>
    </location>
</feature>
<feature type="sequence variant" id="VAR_048048" description="In dbSNP:rs16932503.">
    <original>T</original>
    <variation>K</variation>
    <location>
        <position position="158"/>
    </location>
</feature>
<feature type="sequence variant" id="VAR_048094" description="In dbSNP:rs364427.">
    <original>F</original>
    <variation>L</variation>
    <location>
        <position position="251"/>
    </location>
</feature>
<name>OR5P3_HUMAN</name>
<protein>
    <recommendedName>
        <fullName>Olfactory receptor 5P3</fullName>
    </recommendedName>
    <alternativeName>
        <fullName>Olfactory receptor OR11-94</fullName>
    </alternativeName>
    <alternativeName>
        <fullName>Olfactory receptor-like protein JCG1</fullName>
    </alternativeName>
</protein>
<dbReference type="EMBL" id="AF158377">
    <property type="protein sequence ID" value="AAL32991.1"/>
    <property type="molecule type" value="mRNA"/>
</dbReference>
<dbReference type="EMBL" id="AB065770">
    <property type="protein sequence ID" value="BAC05990.1"/>
    <property type="status" value="ALT_INIT"/>
    <property type="molecule type" value="Genomic_DNA"/>
</dbReference>
<dbReference type="EMBL" id="CH471064">
    <property type="protein sequence ID" value="EAW68645.1"/>
    <property type="molecule type" value="Genomic_DNA"/>
</dbReference>
<dbReference type="EMBL" id="BK004321">
    <property type="protein sequence ID" value="DAA04719.1"/>
    <property type="molecule type" value="Genomic_DNA"/>
</dbReference>
<dbReference type="CCDS" id="CCDS7783.1"/>
<dbReference type="RefSeq" id="NP_703146.1">
    <property type="nucleotide sequence ID" value="NM_153445.2"/>
</dbReference>
<dbReference type="SMR" id="Q8WZ94"/>
<dbReference type="FunCoup" id="Q8WZ94">
    <property type="interactions" value="455"/>
</dbReference>
<dbReference type="STRING" id="9606.ENSP00000492944"/>
<dbReference type="GlyCosmos" id="Q8WZ94">
    <property type="glycosylation" value="1 site, No reported glycans"/>
</dbReference>
<dbReference type="GlyGen" id="Q8WZ94">
    <property type="glycosylation" value="1 site"/>
</dbReference>
<dbReference type="BioMuta" id="OR5P3"/>
<dbReference type="DMDM" id="20532191"/>
<dbReference type="jPOST" id="Q8WZ94"/>
<dbReference type="MassIVE" id="Q8WZ94"/>
<dbReference type="PaxDb" id="9606-ENSP00000332068"/>
<dbReference type="PeptideAtlas" id="Q8WZ94"/>
<dbReference type="Antibodypedia" id="57623">
    <property type="antibodies" value="100 antibodies from 19 providers"/>
</dbReference>
<dbReference type="DNASU" id="120066"/>
<dbReference type="Ensembl" id="ENST00000619725.1">
    <property type="protein sequence ID" value="ENSP00000482237.1"/>
    <property type="gene ID" value="ENSG00000278253.1"/>
</dbReference>
<dbReference type="Ensembl" id="ENST00000630502.1">
    <property type="protein sequence ID" value="ENSP00000486070.1"/>
    <property type="gene ID" value="ENSG00000280808.2"/>
</dbReference>
<dbReference type="Ensembl" id="ENST00000641167.1">
    <property type="protein sequence ID" value="ENSP00000492944.1"/>
    <property type="gene ID" value="ENSG00000182334.3"/>
</dbReference>
<dbReference type="Ensembl" id="ENST00000641500.1">
    <property type="protein sequence ID" value="ENSP00000493390.1"/>
    <property type="gene ID" value="ENSG00000280808.2"/>
</dbReference>
<dbReference type="GeneID" id="120066"/>
<dbReference type="KEGG" id="hsa:120066"/>
<dbReference type="MANE-Select" id="ENST00000641167.1">
    <property type="protein sequence ID" value="ENSP00000492944.1"/>
    <property type="RefSeq nucleotide sequence ID" value="NM_153445.2"/>
    <property type="RefSeq protein sequence ID" value="NP_703146.1"/>
</dbReference>
<dbReference type="UCSC" id="uc010rbg.2">
    <property type="organism name" value="human"/>
</dbReference>
<dbReference type="AGR" id="HGNC:14784"/>
<dbReference type="CTD" id="120066"/>
<dbReference type="DisGeNET" id="120066"/>
<dbReference type="GeneCards" id="OR5P3"/>
<dbReference type="HGNC" id="HGNC:14784">
    <property type="gene designation" value="OR5P3"/>
</dbReference>
<dbReference type="HPA" id="ENSG00000182334">
    <property type="expression patterns" value="Not detected"/>
</dbReference>
<dbReference type="neXtProt" id="NX_Q8WZ94"/>
<dbReference type="OpenTargets" id="ENSG00000182334"/>
<dbReference type="PharmGKB" id="PA32562"/>
<dbReference type="VEuPathDB" id="HostDB:ENSG00000182334"/>
<dbReference type="eggNOG" id="ENOG502SKA1">
    <property type="taxonomic scope" value="Eukaryota"/>
</dbReference>
<dbReference type="GeneTree" id="ENSGT01130000278279"/>
<dbReference type="HOGENOM" id="CLU_012526_1_0_1"/>
<dbReference type="InParanoid" id="Q8WZ94"/>
<dbReference type="OMA" id="LACSHDF"/>
<dbReference type="OrthoDB" id="9873506at2759"/>
<dbReference type="PAN-GO" id="Q8WZ94">
    <property type="GO annotations" value="2 GO annotations based on evolutionary models"/>
</dbReference>
<dbReference type="PhylomeDB" id="Q8WZ94"/>
<dbReference type="TreeFam" id="TF338848"/>
<dbReference type="PathwayCommons" id="Q8WZ94"/>
<dbReference type="Reactome" id="R-HSA-381753">
    <property type="pathway name" value="Olfactory Signaling Pathway"/>
</dbReference>
<dbReference type="Reactome" id="R-HSA-9752946">
    <property type="pathway name" value="Expression and translocation of olfactory receptors"/>
</dbReference>
<dbReference type="BioGRID-ORCS" id="120066">
    <property type="hits" value="9 hits in 744 CRISPR screens"/>
</dbReference>
<dbReference type="GeneWiki" id="OR5P3"/>
<dbReference type="GenomeRNAi" id="120066"/>
<dbReference type="Pharos" id="Q8WZ94">
    <property type="development level" value="Tdark"/>
</dbReference>
<dbReference type="PRO" id="PR:Q8WZ94"/>
<dbReference type="Proteomes" id="UP000005640">
    <property type="component" value="Chromosome 11"/>
</dbReference>
<dbReference type="RNAct" id="Q8WZ94">
    <property type="molecule type" value="protein"/>
</dbReference>
<dbReference type="Bgee" id="ENSG00000182334">
    <property type="expression patterns" value="Expressed in skin of abdomen and 3 other cell types or tissues"/>
</dbReference>
<dbReference type="ExpressionAtlas" id="Q8WZ94">
    <property type="expression patterns" value="baseline and differential"/>
</dbReference>
<dbReference type="GO" id="GO:0005886">
    <property type="term" value="C:plasma membrane"/>
    <property type="evidence" value="ECO:0000304"/>
    <property type="project" value="Reactome"/>
</dbReference>
<dbReference type="GO" id="GO:0004930">
    <property type="term" value="F:G protein-coupled receptor activity"/>
    <property type="evidence" value="ECO:0007669"/>
    <property type="project" value="UniProtKB-KW"/>
</dbReference>
<dbReference type="GO" id="GO:0005549">
    <property type="term" value="F:odorant binding"/>
    <property type="evidence" value="ECO:0000318"/>
    <property type="project" value="GO_Central"/>
</dbReference>
<dbReference type="GO" id="GO:0004984">
    <property type="term" value="F:olfactory receptor activity"/>
    <property type="evidence" value="ECO:0000318"/>
    <property type="project" value="GO_Central"/>
</dbReference>
<dbReference type="CDD" id="cd15416">
    <property type="entry name" value="7tmA_OR5P-like"/>
    <property type="match status" value="1"/>
</dbReference>
<dbReference type="FunFam" id="1.20.1070.10:FF:000004">
    <property type="entry name" value="Olfactory receptor"/>
    <property type="match status" value="1"/>
</dbReference>
<dbReference type="Gene3D" id="1.20.1070.10">
    <property type="entry name" value="Rhodopsin 7-helix transmembrane proteins"/>
    <property type="match status" value="1"/>
</dbReference>
<dbReference type="InterPro" id="IPR000276">
    <property type="entry name" value="GPCR_Rhodpsn"/>
</dbReference>
<dbReference type="InterPro" id="IPR017452">
    <property type="entry name" value="GPCR_Rhodpsn_7TM"/>
</dbReference>
<dbReference type="InterPro" id="IPR000725">
    <property type="entry name" value="Olfact_rcpt"/>
</dbReference>
<dbReference type="PANTHER" id="PTHR48018">
    <property type="entry name" value="OLFACTORY RECEPTOR"/>
    <property type="match status" value="1"/>
</dbReference>
<dbReference type="Pfam" id="PF13853">
    <property type="entry name" value="7tm_4"/>
    <property type="match status" value="1"/>
</dbReference>
<dbReference type="PRINTS" id="PR00237">
    <property type="entry name" value="GPCRRHODOPSN"/>
</dbReference>
<dbReference type="PRINTS" id="PR00245">
    <property type="entry name" value="OLFACTORYR"/>
</dbReference>
<dbReference type="SUPFAM" id="SSF81321">
    <property type="entry name" value="Family A G protein-coupled receptor-like"/>
    <property type="match status" value="1"/>
</dbReference>
<dbReference type="PROSITE" id="PS00237">
    <property type="entry name" value="G_PROTEIN_RECEP_F1_1"/>
    <property type="match status" value="1"/>
</dbReference>
<dbReference type="PROSITE" id="PS50262">
    <property type="entry name" value="G_PROTEIN_RECEP_F1_2"/>
    <property type="match status" value="1"/>
</dbReference>
<accession>Q8WZ94</accession>
<accession>Q6IFE1</accession>
<accession>Q8NGM2</accession>
<reference key="1">
    <citation type="journal article" date="2001" name="Chem. Senses">
        <title>New GPCRs from a human lingual cDNA library.</title>
        <authorList>
            <person name="Gaudin J.-C."/>
            <person name="Breuils L."/>
            <person name="Haertle T."/>
        </authorList>
    </citation>
    <scope>NUCLEOTIDE SEQUENCE [MRNA]</scope>
    <source>
        <tissue>Tongue</tissue>
    </source>
</reference>
<reference key="2">
    <citation type="submission" date="2001-07" db="EMBL/GenBank/DDBJ databases">
        <title>Genome-wide discovery and analysis of human seven transmembrane helix receptor genes.</title>
        <authorList>
            <person name="Suwa M."/>
            <person name="Sato T."/>
            <person name="Okouchi I."/>
            <person name="Arita M."/>
            <person name="Futami K."/>
            <person name="Matsumoto S."/>
            <person name="Tsutsumi S."/>
            <person name="Aburatani H."/>
            <person name="Asai K."/>
            <person name="Akiyama Y."/>
        </authorList>
    </citation>
    <scope>NUCLEOTIDE SEQUENCE [GENOMIC DNA]</scope>
</reference>
<reference key="3">
    <citation type="submission" date="2005-09" db="EMBL/GenBank/DDBJ databases">
        <authorList>
            <person name="Mural R.J."/>
            <person name="Istrail S."/>
            <person name="Sutton G.G."/>
            <person name="Florea L."/>
            <person name="Halpern A.L."/>
            <person name="Mobarry C.M."/>
            <person name="Lippert R."/>
            <person name="Walenz B."/>
            <person name="Shatkay H."/>
            <person name="Dew I."/>
            <person name="Miller J.R."/>
            <person name="Flanigan M.J."/>
            <person name="Edwards N.J."/>
            <person name="Bolanos R."/>
            <person name="Fasulo D."/>
            <person name="Halldorsson B.V."/>
            <person name="Hannenhalli S."/>
            <person name="Turner R."/>
            <person name="Yooseph S."/>
            <person name="Lu F."/>
            <person name="Nusskern D.R."/>
            <person name="Shue B.C."/>
            <person name="Zheng X.H."/>
            <person name="Zhong F."/>
            <person name="Delcher A.L."/>
            <person name="Huson D.H."/>
            <person name="Kravitz S.A."/>
            <person name="Mouchard L."/>
            <person name="Reinert K."/>
            <person name="Remington K.A."/>
            <person name="Clark A.G."/>
            <person name="Waterman M.S."/>
            <person name="Eichler E.E."/>
            <person name="Adams M.D."/>
            <person name="Hunkapiller M.W."/>
            <person name="Myers E.W."/>
            <person name="Venter J.C."/>
        </authorList>
    </citation>
    <scope>NUCLEOTIDE SEQUENCE [LARGE SCALE GENOMIC DNA]</scope>
</reference>
<reference key="4">
    <citation type="journal article" date="2004" name="Proc. Natl. Acad. Sci. U.S.A.">
        <title>The human olfactory receptor gene family.</title>
        <authorList>
            <person name="Malnic B."/>
            <person name="Godfrey P.A."/>
            <person name="Buck L.B."/>
        </authorList>
    </citation>
    <scope>IDENTIFICATION</scope>
</reference>
<reference key="5">
    <citation type="journal article" date="2004" name="Proc. Natl. Acad. Sci. U.S.A.">
        <authorList>
            <person name="Malnic B."/>
            <person name="Godfrey P.A."/>
            <person name="Buck L.B."/>
        </authorList>
    </citation>
    <scope>ERRATUM OF PUBMED:14983052</scope>
</reference>
<proteinExistence type="evidence at transcript level"/>
<organism>
    <name type="scientific">Homo sapiens</name>
    <name type="common">Human</name>
    <dbReference type="NCBI Taxonomy" id="9606"/>
    <lineage>
        <taxon>Eukaryota</taxon>
        <taxon>Metazoa</taxon>
        <taxon>Chordata</taxon>
        <taxon>Craniata</taxon>
        <taxon>Vertebrata</taxon>
        <taxon>Euteleostomi</taxon>
        <taxon>Mammalia</taxon>
        <taxon>Eutheria</taxon>
        <taxon>Euarchontoglires</taxon>
        <taxon>Primates</taxon>
        <taxon>Haplorrhini</taxon>
        <taxon>Catarrhini</taxon>
        <taxon>Hominidae</taxon>
        <taxon>Homo</taxon>
    </lineage>
</organism>
<keyword id="KW-1003">Cell membrane</keyword>
<keyword id="KW-1015">Disulfide bond</keyword>
<keyword id="KW-0297">G-protein coupled receptor</keyword>
<keyword id="KW-0325">Glycoprotein</keyword>
<keyword id="KW-0472">Membrane</keyword>
<keyword id="KW-0552">Olfaction</keyword>
<keyword id="KW-0675">Receptor</keyword>
<keyword id="KW-1185">Reference proteome</keyword>
<keyword id="KW-0716">Sensory transduction</keyword>
<keyword id="KW-0807">Transducer</keyword>
<keyword id="KW-0812">Transmembrane</keyword>
<keyword id="KW-1133">Transmembrane helix</keyword>
<evidence type="ECO:0000255" key="1"/>
<evidence type="ECO:0000255" key="2">
    <source>
        <dbReference type="PROSITE-ProRule" id="PRU00521"/>
    </source>
</evidence>
<evidence type="ECO:0000305" key="3"/>